<feature type="chain" id="PRO_0000331623" description="Phosphatidylinositide phosphatase SAC2">
    <location>
        <begin position="1"/>
        <end position="1120"/>
    </location>
</feature>
<feature type="domain" description="SAC" evidence="3">
    <location>
        <begin position="167"/>
        <end position="518"/>
    </location>
</feature>
<feature type="domain" description="hSac2" evidence="4">
    <location>
        <begin position="593"/>
        <end position="760"/>
    </location>
</feature>
<feature type="region of interest" description="Disordered" evidence="5">
    <location>
        <begin position="837"/>
        <end position="881"/>
    </location>
</feature>
<feature type="region of interest" description="Disordered" evidence="5">
    <location>
        <begin position="979"/>
        <end position="1008"/>
    </location>
</feature>
<feature type="compositionally biased region" description="Basic and acidic residues" evidence="5">
    <location>
        <begin position="851"/>
        <end position="860"/>
    </location>
</feature>
<feature type="compositionally biased region" description="Polar residues" evidence="5">
    <location>
        <begin position="864"/>
        <end position="879"/>
    </location>
</feature>
<feature type="compositionally biased region" description="Polar residues" evidence="5">
    <location>
        <begin position="998"/>
        <end position="1007"/>
    </location>
</feature>
<protein>
    <recommendedName>
        <fullName evidence="2">Phosphatidylinositide phosphatase SAC2</fullName>
        <ecNumber evidence="2">3.1.3.25</ecNumber>
    </recommendedName>
    <alternativeName>
        <fullName evidence="2">Inositol polyphosphate 5-phosphatase F</fullName>
    </alternativeName>
    <alternativeName>
        <fullName>Sac domain-containing inositol phosphatase 2</fullName>
    </alternativeName>
    <alternativeName>
        <fullName evidence="6">Sac domain-containing phosphoinositide 4-phosphatase 2</fullName>
        <shortName>hSAC2</shortName>
    </alternativeName>
</protein>
<accession>A8E7C5</accession>
<keyword id="KW-0168">Coated pit</keyword>
<keyword id="KW-0967">Endosome</keyword>
<keyword id="KW-0378">Hydrolase</keyword>
<keyword id="KW-0472">Membrane</keyword>
<keyword id="KW-1185">Reference proteome</keyword>
<evidence type="ECO:0000250" key="1">
    <source>
        <dbReference type="UniProtKB" id="Q8CDA1"/>
    </source>
</evidence>
<evidence type="ECO:0000250" key="2">
    <source>
        <dbReference type="UniProtKB" id="Q9Y2H2"/>
    </source>
</evidence>
<evidence type="ECO:0000255" key="3">
    <source>
        <dbReference type="PROSITE-ProRule" id="PRU00183"/>
    </source>
</evidence>
<evidence type="ECO:0000255" key="4">
    <source>
        <dbReference type="PROSITE-ProRule" id="PRU01127"/>
    </source>
</evidence>
<evidence type="ECO:0000256" key="5">
    <source>
        <dbReference type="SAM" id="MobiDB-lite"/>
    </source>
</evidence>
<evidence type="ECO:0000305" key="6"/>
<proteinExistence type="inferred from homology"/>
<sequence length="1120" mass="126054">MELFQAKDHYILQSGDNALWCSRKDGSMAVRPATDLLLAWNPVCLGLVEGIIGKMQLHVDLPLGLILIRQKALVGQLPGDHKVYKITKIVVIPLSEDEPQDLELELCKKHHFGINKPERITQSPDETKFLMKTLSQIKSNVGAPIKKKVKENKEKERLERRLLDELYKIFMDSDSFYYSLTYDLTNTVQRQGELGKSDQPLWKRVDDRFFWNKHMIKDLVDLQAPQVDFWVIPIIQGFVQVEELVVNYNESSDEERSSPETPLQEPTCVDDIHPRFTVALISRRSRHRAGMRYKRRGVDTDGHVANYVETEQLIHVHSHTLSFVQTRGSVPVFWSQAGYRYNPRPRIEKGERETMPYFASHFEKEVETYKKLVIINLVDQNGREKIIGDAYLKQVLLYNNPNLTYVSFDFHEHCRGMKFENVQTLTDAIYDIITDMRWAWVDQAGVICQQEGIFRVNCMDCLDRTNVVQAAIARVIMEQQLKKLGVMPPEQPLPLKCYRIYQVMWANNGDTISRQYAGTAALKGDFTRTGERKLAGVMKDGVNSANRYYLNRFRDAYRQAVIDLMMGHPVTEDLYSIFSKEKEHEEKEKESQRGAQEQVSLLLQTYMQLLLPDDEKFHGGWALIDCDPSLIDATHKDVDVLLLLSNSAYYVAYYDEEADKVNQYQRLSLEGLEKIEIGPEPTLFGKPKYCCMRLHYKNGETSGYFHTLRSVTRNPEDDGKDTLQCIAEMLRITKQAMGLDVQVVEKKLERRHSKPHEDIMGIQGKAVDQVLGSGLAQGKSFFLNKFSTLNQKVKQTKTNVNIGNFKPLGKLGTFSKPEVKVNFLKPNLHMNLWKSDSSLETHDSNTGSGALKDHGPHSEEISSDSDSYNSDEQPCSGSRENVDYVLPSCGIVASAPRLGSRSQSIGSVEIAVPSVIRVTGCDEKTMDSLSVAADQSPGAASEAEEAILIDFGTPIDVYCHQFVQDAKTKPIEVFEEVAPAPKPQGPQVPLAPDAKLGSSHSQNQLPRPSQLEVESNVHGANLLTVQPVGSATSCGSQKSLEGITGPSSADSNGSRVVSPFAKIRSSMVQVASLTQAGLTQGINFAVAKVQKSPEPDAVNETQENELRAMFTQCQTRIIQI</sequence>
<dbReference type="EC" id="3.1.3.25" evidence="2"/>
<dbReference type="EMBL" id="BX005252">
    <property type="protein sequence ID" value="CAP09243.1"/>
    <property type="molecule type" value="Genomic_DNA"/>
</dbReference>
<dbReference type="EMBL" id="BX530079">
    <property type="protein sequence ID" value="CAP09243.1"/>
    <property type="status" value="JOINED"/>
    <property type="molecule type" value="Genomic_DNA"/>
</dbReference>
<dbReference type="RefSeq" id="NP_001119904.1">
    <property type="nucleotide sequence ID" value="NM_001126432.1"/>
</dbReference>
<dbReference type="SMR" id="A8E7C5"/>
<dbReference type="FunCoup" id="A8E7C5">
    <property type="interactions" value="1509"/>
</dbReference>
<dbReference type="STRING" id="7955.ENSDARP00000121830"/>
<dbReference type="PaxDb" id="7955-ENSDARP00000082038"/>
<dbReference type="PeptideAtlas" id="A8E7C5"/>
<dbReference type="Ensembl" id="ENSDART00000140634">
    <property type="protein sequence ID" value="ENSDARP00000121830"/>
    <property type="gene ID" value="ENSDARG00000061437"/>
</dbReference>
<dbReference type="GeneID" id="570007"/>
<dbReference type="KEGG" id="dre:570007"/>
<dbReference type="AGR" id="ZFIN:ZDB-GENE-041111-194"/>
<dbReference type="CTD" id="22876"/>
<dbReference type="ZFIN" id="ZDB-GENE-041111-194">
    <property type="gene designation" value="inpp5f"/>
</dbReference>
<dbReference type="eggNOG" id="KOG1890">
    <property type="taxonomic scope" value="Eukaryota"/>
</dbReference>
<dbReference type="HOGENOM" id="CLU_008079_0_0_1"/>
<dbReference type="InParanoid" id="A8E7C5"/>
<dbReference type="OMA" id="ALHKESQ"/>
<dbReference type="OrthoDB" id="405996at2759"/>
<dbReference type="PhylomeDB" id="A8E7C5"/>
<dbReference type="Reactome" id="R-DRE-1660516">
    <property type="pathway name" value="Synthesis of PIPs at the early endosome membrane"/>
</dbReference>
<dbReference type="PRO" id="PR:A8E7C5"/>
<dbReference type="Proteomes" id="UP000000437">
    <property type="component" value="Chromosome 13"/>
</dbReference>
<dbReference type="Bgee" id="ENSDARG00000061437">
    <property type="expression patterns" value="Expressed in early embryo and 20 other cell types or tissues"/>
</dbReference>
<dbReference type="GO" id="GO:0045334">
    <property type="term" value="C:clathrin-coated endocytic vesicle"/>
    <property type="evidence" value="ECO:0000250"/>
    <property type="project" value="UniProtKB"/>
</dbReference>
<dbReference type="GO" id="GO:0005905">
    <property type="term" value="C:clathrin-coated pit"/>
    <property type="evidence" value="ECO:0007669"/>
    <property type="project" value="UniProtKB-SubCell"/>
</dbReference>
<dbReference type="GO" id="GO:0005769">
    <property type="term" value="C:early endosome"/>
    <property type="evidence" value="ECO:0000250"/>
    <property type="project" value="UniProtKB"/>
</dbReference>
<dbReference type="GO" id="GO:0055037">
    <property type="term" value="C:recycling endosome"/>
    <property type="evidence" value="ECO:0000250"/>
    <property type="project" value="UniProtKB"/>
</dbReference>
<dbReference type="GO" id="GO:0052833">
    <property type="term" value="F:inositol monophosphate 4-phosphatase activity"/>
    <property type="evidence" value="ECO:0000250"/>
    <property type="project" value="UniProtKB"/>
</dbReference>
<dbReference type="GO" id="GO:0043812">
    <property type="term" value="F:phosphatidylinositol-4-phosphate phosphatase activity"/>
    <property type="evidence" value="ECO:0000318"/>
    <property type="project" value="GO_Central"/>
</dbReference>
<dbReference type="GO" id="GO:0042803">
    <property type="term" value="F:protein homodimerization activity"/>
    <property type="evidence" value="ECO:0000250"/>
    <property type="project" value="UniProtKB"/>
</dbReference>
<dbReference type="GO" id="GO:0072583">
    <property type="term" value="P:clathrin-dependent endocytosis"/>
    <property type="evidence" value="ECO:0000250"/>
    <property type="project" value="UniProtKB"/>
</dbReference>
<dbReference type="GO" id="GO:0046856">
    <property type="term" value="P:phosphatidylinositol dephosphorylation"/>
    <property type="evidence" value="ECO:0000318"/>
    <property type="project" value="GO_Central"/>
</dbReference>
<dbReference type="GO" id="GO:2001135">
    <property type="term" value="P:regulation of endocytic recycling"/>
    <property type="evidence" value="ECO:0000250"/>
    <property type="project" value="UniProtKB"/>
</dbReference>
<dbReference type="InterPro" id="IPR034753">
    <property type="entry name" value="hSac2"/>
</dbReference>
<dbReference type="InterPro" id="IPR022158">
    <property type="entry name" value="Inositol_phosphatase"/>
</dbReference>
<dbReference type="InterPro" id="IPR002013">
    <property type="entry name" value="SAC_dom"/>
</dbReference>
<dbReference type="PANTHER" id="PTHR45662">
    <property type="entry name" value="PHOSPHATIDYLINOSITIDE PHOSPHATASE SAC1"/>
    <property type="match status" value="1"/>
</dbReference>
<dbReference type="PANTHER" id="PTHR45662:SF8">
    <property type="entry name" value="PHOSPHATIDYLINOSITIDE PHOSPHATASE SAC2"/>
    <property type="match status" value="1"/>
</dbReference>
<dbReference type="Pfam" id="PF12456">
    <property type="entry name" value="hSac2"/>
    <property type="match status" value="1"/>
</dbReference>
<dbReference type="Pfam" id="PF02383">
    <property type="entry name" value="Syja_N"/>
    <property type="match status" value="1"/>
</dbReference>
<dbReference type="PROSITE" id="PS51791">
    <property type="entry name" value="HSAC2"/>
    <property type="match status" value="1"/>
</dbReference>
<dbReference type="PROSITE" id="PS50275">
    <property type="entry name" value="SAC"/>
    <property type="match status" value="1"/>
</dbReference>
<name>SAC2_DANRE</name>
<gene>
    <name evidence="2" type="primary">inpp5f</name>
    <name evidence="2" type="synonym">sac2</name>
    <name type="ORF">si:dkey-192p21.1</name>
</gene>
<organism>
    <name type="scientific">Danio rerio</name>
    <name type="common">Zebrafish</name>
    <name type="synonym">Brachydanio rerio</name>
    <dbReference type="NCBI Taxonomy" id="7955"/>
    <lineage>
        <taxon>Eukaryota</taxon>
        <taxon>Metazoa</taxon>
        <taxon>Chordata</taxon>
        <taxon>Craniata</taxon>
        <taxon>Vertebrata</taxon>
        <taxon>Euteleostomi</taxon>
        <taxon>Actinopterygii</taxon>
        <taxon>Neopterygii</taxon>
        <taxon>Teleostei</taxon>
        <taxon>Ostariophysi</taxon>
        <taxon>Cypriniformes</taxon>
        <taxon>Danionidae</taxon>
        <taxon>Danioninae</taxon>
        <taxon>Danio</taxon>
    </lineage>
</organism>
<comment type="function">
    <text evidence="1 2">Inositol 4-phosphatase which mainly acts on phosphatidylinositol 4-phosphate. May be functionally linked to OCRL, which converts phosphatidylinositol 4,5-bisphosphate to phosphatidylinositol, for a sequential dephosphorylation of phosphatidylinositol 4,5-bisphosphate at the 5 and 4 position of inositol, thus playing an important role in the endocytic recycling.</text>
</comment>
<comment type="catalytic activity">
    <reaction evidence="2">
        <text>a myo-inositol phosphate + H2O = myo-inositol + phosphate</text>
        <dbReference type="Rhea" id="RHEA:24056"/>
        <dbReference type="ChEBI" id="CHEBI:15377"/>
        <dbReference type="ChEBI" id="CHEBI:17268"/>
        <dbReference type="ChEBI" id="CHEBI:43474"/>
        <dbReference type="ChEBI" id="CHEBI:84139"/>
        <dbReference type="EC" id="3.1.3.25"/>
    </reaction>
</comment>
<comment type="subcellular location">
    <subcellularLocation>
        <location evidence="2">Membrane</location>
        <location evidence="2">Clathrin-coated pit</location>
    </subcellularLocation>
    <subcellularLocation>
        <location evidence="2">Early endosome</location>
    </subcellularLocation>
    <subcellularLocation>
        <location evidence="2">Recycling endosome</location>
    </subcellularLocation>
    <text evidence="1">Also found on macropinosomes.</text>
</comment>
<comment type="caution">
    <text evidence="2">INPP5F has been initially described as an inositol polyphosphate 5-phosphatase.</text>
</comment>
<reference key="1">
    <citation type="journal article" date="2013" name="Nature">
        <title>The zebrafish reference genome sequence and its relationship to the human genome.</title>
        <authorList>
            <person name="Howe K."/>
            <person name="Clark M.D."/>
            <person name="Torroja C.F."/>
            <person name="Torrance J."/>
            <person name="Berthelot C."/>
            <person name="Muffato M."/>
            <person name="Collins J.E."/>
            <person name="Humphray S."/>
            <person name="McLaren K."/>
            <person name="Matthews L."/>
            <person name="McLaren S."/>
            <person name="Sealy I."/>
            <person name="Caccamo M."/>
            <person name="Churcher C."/>
            <person name="Scott C."/>
            <person name="Barrett J.C."/>
            <person name="Koch R."/>
            <person name="Rauch G.J."/>
            <person name="White S."/>
            <person name="Chow W."/>
            <person name="Kilian B."/>
            <person name="Quintais L.T."/>
            <person name="Guerra-Assuncao J.A."/>
            <person name="Zhou Y."/>
            <person name="Gu Y."/>
            <person name="Yen J."/>
            <person name="Vogel J.H."/>
            <person name="Eyre T."/>
            <person name="Redmond S."/>
            <person name="Banerjee R."/>
            <person name="Chi J."/>
            <person name="Fu B."/>
            <person name="Langley E."/>
            <person name="Maguire S.F."/>
            <person name="Laird G.K."/>
            <person name="Lloyd D."/>
            <person name="Kenyon E."/>
            <person name="Donaldson S."/>
            <person name="Sehra H."/>
            <person name="Almeida-King J."/>
            <person name="Loveland J."/>
            <person name="Trevanion S."/>
            <person name="Jones M."/>
            <person name="Quail M."/>
            <person name="Willey D."/>
            <person name="Hunt A."/>
            <person name="Burton J."/>
            <person name="Sims S."/>
            <person name="McLay K."/>
            <person name="Plumb B."/>
            <person name="Davis J."/>
            <person name="Clee C."/>
            <person name="Oliver K."/>
            <person name="Clark R."/>
            <person name="Riddle C."/>
            <person name="Elliot D."/>
            <person name="Threadgold G."/>
            <person name="Harden G."/>
            <person name="Ware D."/>
            <person name="Begum S."/>
            <person name="Mortimore B."/>
            <person name="Kerry G."/>
            <person name="Heath P."/>
            <person name="Phillimore B."/>
            <person name="Tracey A."/>
            <person name="Corby N."/>
            <person name="Dunn M."/>
            <person name="Johnson C."/>
            <person name="Wood J."/>
            <person name="Clark S."/>
            <person name="Pelan S."/>
            <person name="Griffiths G."/>
            <person name="Smith M."/>
            <person name="Glithero R."/>
            <person name="Howden P."/>
            <person name="Barker N."/>
            <person name="Lloyd C."/>
            <person name="Stevens C."/>
            <person name="Harley J."/>
            <person name="Holt K."/>
            <person name="Panagiotidis G."/>
            <person name="Lovell J."/>
            <person name="Beasley H."/>
            <person name="Henderson C."/>
            <person name="Gordon D."/>
            <person name="Auger K."/>
            <person name="Wright D."/>
            <person name="Collins J."/>
            <person name="Raisen C."/>
            <person name="Dyer L."/>
            <person name="Leung K."/>
            <person name="Robertson L."/>
            <person name="Ambridge K."/>
            <person name="Leongamornlert D."/>
            <person name="McGuire S."/>
            <person name="Gilderthorp R."/>
            <person name="Griffiths C."/>
            <person name="Manthravadi D."/>
            <person name="Nichol S."/>
            <person name="Barker G."/>
            <person name="Whitehead S."/>
            <person name="Kay M."/>
            <person name="Brown J."/>
            <person name="Murnane C."/>
            <person name="Gray E."/>
            <person name="Humphries M."/>
            <person name="Sycamore N."/>
            <person name="Barker D."/>
            <person name="Saunders D."/>
            <person name="Wallis J."/>
            <person name="Babbage A."/>
            <person name="Hammond S."/>
            <person name="Mashreghi-Mohammadi M."/>
            <person name="Barr L."/>
            <person name="Martin S."/>
            <person name="Wray P."/>
            <person name="Ellington A."/>
            <person name="Matthews N."/>
            <person name="Ellwood M."/>
            <person name="Woodmansey R."/>
            <person name="Clark G."/>
            <person name="Cooper J."/>
            <person name="Tromans A."/>
            <person name="Grafham D."/>
            <person name="Skuce C."/>
            <person name="Pandian R."/>
            <person name="Andrews R."/>
            <person name="Harrison E."/>
            <person name="Kimberley A."/>
            <person name="Garnett J."/>
            <person name="Fosker N."/>
            <person name="Hall R."/>
            <person name="Garner P."/>
            <person name="Kelly D."/>
            <person name="Bird C."/>
            <person name="Palmer S."/>
            <person name="Gehring I."/>
            <person name="Berger A."/>
            <person name="Dooley C.M."/>
            <person name="Ersan-Urun Z."/>
            <person name="Eser C."/>
            <person name="Geiger H."/>
            <person name="Geisler M."/>
            <person name="Karotki L."/>
            <person name="Kirn A."/>
            <person name="Konantz J."/>
            <person name="Konantz M."/>
            <person name="Oberlander M."/>
            <person name="Rudolph-Geiger S."/>
            <person name="Teucke M."/>
            <person name="Lanz C."/>
            <person name="Raddatz G."/>
            <person name="Osoegawa K."/>
            <person name="Zhu B."/>
            <person name="Rapp A."/>
            <person name="Widaa S."/>
            <person name="Langford C."/>
            <person name="Yang F."/>
            <person name="Schuster S.C."/>
            <person name="Carter N.P."/>
            <person name="Harrow J."/>
            <person name="Ning Z."/>
            <person name="Herrero J."/>
            <person name="Searle S.M."/>
            <person name="Enright A."/>
            <person name="Geisler R."/>
            <person name="Plasterk R.H."/>
            <person name="Lee C."/>
            <person name="Westerfield M."/>
            <person name="de Jong P.J."/>
            <person name="Zon L.I."/>
            <person name="Postlethwait J.H."/>
            <person name="Nusslein-Volhard C."/>
            <person name="Hubbard T.J."/>
            <person name="Roest Crollius H."/>
            <person name="Rogers J."/>
            <person name="Stemple D.L."/>
        </authorList>
    </citation>
    <scope>NUCLEOTIDE SEQUENCE [LARGE SCALE GENOMIC DNA]</scope>
    <source>
        <strain>Tuebingen</strain>
    </source>
</reference>